<reference evidence="4" key="1">
    <citation type="journal article" date="2011" name="Biochimie">
        <title>Isolation, molecular cloning and antimicrobial activity of novel defensins from common chickweed (Stellaria media L.) seeds.</title>
        <authorList>
            <person name="Slavokhotova A.A."/>
            <person name="Odintsova T.I."/>
            <person name="Rogozhin E.A."/>
            <person name="Musolyamov A.K."/>
            <person name="Andreev Y.A."/>
            <person name="Grishin E.V."/>
            <person name="Egorov T.A."/>
        </authorList>
    </citation>
    <scope>NUCLEOTIDE SEQUENCE [GENOMIC DNA / MRNA]</scope>
    <scope>PROTEIN SEQUENCE OF 32-81</scope>
    <scope>FUNCTION</scope>
    <scope>MASS SPECTROMETRY</scope>
    <scope>IDENTIFICATION BY MASS SPECTROMETRY</scope>
    <source>
        <tissue evidence="3">Seed</tissue>
    </source>
</reference>
<sequence>MAKTVLGIHVTFLTLLFAVILLNDVMYTPVEKICERASGTWKGICIHSNDCNNQCVKWENAGSGSCHYQFPNYMCFCYFNC</sequence>
<accession>C0HL83</accession>
<dbReference type="SMR" id="C0HL83"/>
<dbReference type="GO" id="GO:0050832">
    <property type="term" value="P:defense response to fungus"/>
    <property type="evidence" value="ECO:0007669"/>
    <property type="project" value="UniProtKB-KW"/>
</dbReference>
<dbReference type="GO" id="GO:0031640">
    <property type="term" value="P:killing of cells of another organism"/>
    <property type="evidence" value="ECO:0007669"/>
    <property type="project" value="UniProtKB-KW"/>
</dbReference>
<dbReference type="Gene3D" id="3.30.30.10">
    <property type="entry name" value="Knottin, scorpion toxin-like"/>
    <property type="match status" value="1"/>
</dbReference>
<dbReference type="InterPro" id="IPR008176">
    <property type="entry name" value="Defensin_plant"/>
</dbReference>
<dbReference type="InterPro" id="IPR003614">
    <property type="entry name" value="Scorpion_toxin-like"/>
</dbReference>
<dbReference type="InterPro" id="IPR036574">
    <property type="entry name" value="Scorpion_toxin-like_sf"/>
</dbReference>
<dbReference type="PANTHER" id="PTHR33147">
    <property type="entry name" value="DEFENSIN-LIKE PROTEIN 1"/>
    <property type="match status" value="1"/>
</dbReference>
<dbReference type="PANTHER" id="PTHR33147:SF98">
    <property type="entry name" value="GAMMA-THIONIN-RELATED"/>
    <property type="match status" value="1"/>
</dbReference>
<dbReference type="Pfam" id="PF00304">
    <property type="entry name" value="Gamma-thionin"/>
    <property type="match status" value="1"/>
</dbReference>
<dbReference type="SMART" id="SM00505">
    <property type="entry name" value="Knot1"/>
    <property type="match status" value="1"/>
</dbReference>
<dbReference type="SUPFAM" id="SSF57095">
    <property type="entry name" value="Scorpion toxin-like"/>
    <property type="match status" value="1"/>
</dbReference>
<dbReference type="PROSITE" id="PS00940">
    <property type="entry name" value="GAMMA_THIONIN"/>
    <property type="match status" value="1"/>
</dbReference>
<organism evidence="3">
    <name type="scientific">Stellaria media</name>
    <name type="common">Common chickweed</name>
    <name type="synonym">Alsine media</name>
    <dbReference type="NCBI Taxonomy" id="13274"/>
    <lineage>
        <taxon>Eukaryota</taxon>
        <taxon>Viridiplantae</taxon>
        <taxon>Streptophyta</taxon>
        <taxon>Embryophyta</taxon>
        <taxon>Tracheophyta</taxon>
        <taxon>Spermatophyta</taxon>
        <taxon>Magnoliopsida</taxon>
        <taxon>eudicotyledons</taxon>
        <taxon>Gunneridae</taxon>
        <taxon>Pentapetalae</taxon>
        <taxon>Caryophyllales</taxon>
        <taxon>Caryophyllaceae</taxon>
        <taxon>Alsineae</taxon>
        <taxon>Stellaria</taxon>
    </lineage>
</organism>
<feature type="signal peptide" evidence="2">
    <location>
        <begin position="1"/>
        <end position="31"/>
    </location>
</feature>
<feature type="peptide" id="PRO_0000443560" description="Antimicrobial peptide D2" evidence="2">
    <location>
        <begin position="32"/>
        <end position="81"/>
    </location>
</feature>
<feature type="disulfide bond" evidence="1">
    <location>
        <begin position="34"/>
        <end position="81"/>
    </location>
</feature>
<feature type="disulfide bond" evidence="1">
    <location>
        <begin position="45"/>
        <end position="66"/>
    </location>
</feature>
<feature type="disulfide bond" evidence="1">
    <location>
        <begin position="51"/>
        <end position="75"/>
    </location>
</feature>
<feature type="disulfide bond" evidence="1">
    <location>
        <begin position="55"/>
        <end position="77"/>
    </location>
</feature>
<evidence type="ECO:0000250" key="1">
    <source>
        <dbReference type="UniProtKB" id="P69241"/>
    </source>
</evidence>
<evidence type="ECO:0000269" key="2">
    <source>
    </source>
</evidence>
<evidence type="ECO:0000303" key="3">
    <source>
    </source>
</evidence>
<evidence type="ECO:0000305" key="4"/>
<proteinExistence type="evidence at protein level"/>
<keyword id="KW-0929">Antimicrobial</keyword>
<keyword id="KW-0903">Direct protein sequencing</keyword>
<keyword id="KW-1015">Disulfide bond</keyword>
<keyword id="KW-0295">Fungicide</keyword>
<keyword id="KW-0732">Signal</keyword>
<name>AMPD2_STEME</name>
<comment type="function">
    <text evidence="2">Antimicrobial peptide probably active against fungi like B.sorokiniana, F.oxysporum, F.graminearum, F.avenaceum, B.cinerea, P.beta, P.infestans and P.debaryanum.</text>
</comment>
<comment type="mass spectrometry"/>
<comment type="similarity">
    <text evidence="4">Belongs to the DEFL family.</text>
</comment>
<protein>
    <recommendedName>
        <fullName evidence="3">Antimicrobial peptide D2</fullName>
        <shortName evidence="3">Sm-AMP-D2</shortName>
        <shortName evidence="3">Sm-D2</shortName>
    </recommendedName>
</protein>